<gene>
    <name evidence="1" type="primary">rpsP</name>
    <name type="ordered locus">aq_123</name>
</gene>
<protein>
    <recommendedName>
        <fullName evidence="1">Small ribosomal subunit protein bS16</fullName>
    </recommendedName>
    <alternativeName>
        <fullName evidence="2">30S ribosomal protein S16</fullName>
    </alternativeName>
</protein>
<sequence>MAVRIRLAKFGRKHHPIYRIVVMDAKSPREGKYIDILGTYDPKRKVLINVYPEKVKEWVLKGVELSHRAKAILWNHGILKEVVPEGYEMKRVGDYYVFEKRESKKSKGGEAA</sequence>
<reference key="1">
    <citation type="journal article" date="1998" name="Nature">
        <title>The complete genome of the hyperthermophilic bacterium Aquifex aeolicus.</title>
        <authorList>
            <person name="Deckert G."/>
            <person name="Warren P.V."/>
            <person name="Gaasterland T."/>
            <person name="Young W.G."/>
            <person name="Lenox A.L."/>
            <person name="Graham D.E."/>
            <person name="Overbeek R."/>
            <person name="Snead M.A."/>
            <person name="Keller M."/>
            <person name="Aujay M."/>
            <person name="Huber R."/>
            <person name="Feldman R.A."/>
            <person name="Short J.M."/>
            <person name="Olsen G.J."/>
            <person name="Swanson R.V."/>
        </authorList>
    </citation>
    <scope>NUCLEOTIDE SEQUENCE [LARGE SCALE GENOMIC DNA]</scope>
    <source>
        <strain>VF5</strain>
    </source>
</reference>
<evidence type="ECO:0000255" key="1">
    <source>
        <dbReference type="HAMAP-Rule" id="MF_00385"/>
    </source>
</evidence>
<evidence type="ECO:0000305" key="2"/>
<evidence type="ECO:0007829" key="3">
    <source>
        <dbReference type="PDB" id="3BN0"/>
    </source>
</evidence>
<keyword id="KW-0002">3D-structure</keyword>
<keyword id="KW-1185">Reference proteome</keyword>
<keyword id="KW-0687">Ribonucleoprotein</keyword>
<keyword id="KW-0689">Ribosomal protein</keyword>
<name>RS16_AQUAE</name>
<proteinExistence type="evidence at protein level"/>
<accession>O66523</accession>
<feature type="chain" id="PRO_0000167146" description="Small ribosomal subunit protein bS16">
    <location>
        <begin position="1"/>
        <end position="112"/>
    </location>
</feature>
<feature type="strand" evidence="3">
    <location>
        <begin position="3"/>
        <end position="12"/>
    </location>
</feature>
<feature type="strand" evidence="3">
    <location>
        <begin position="15"/>
        <end position="24"/>
    </location>
</feature>
<feature type="strand" evidence="3">
    <location>
        <begin position="34"/>
        <end position="41"/>
    </location>
</feature>
<feature type="turn" evidence="3">
    <location>
        <begin position="42"/>
        <end position="45"/>
    </location>
</feature>
<feature type="strand" evidence="3">
    <location>
        <begin position="46"/>
        <end position="50"/>
    </location>
</feature>
<feature type="helix" evidence="3">
    <location>
        <begin position="52"/>
        <end position="60"/>
    </location>
</feature>
<feature type="strand" evidence="3">
    <location>
        <begin position="64"/>
        <end position="66"/>
    </location>
</feature>
<feature type="helix" evidence="3">
    <location>
        <begin position="67"/>
        <end position="75"/>
    </location>
</feature>
<feature type="helix" evidence="3">
    <location>
        <begin position="78"/>
        <end position="82"/>
    </location>
</feature>
<feature type="strand" evidence="3">
    <location>
        <begin position="87"/>
        <end position="92"/>
    </location>
</feature>
<feature type="strand" evidence="3">
    <location>
        <begin position="95"/>
        <end position="100"/>
    </location>
</feature>
<dbReference type="EMBL" id="AE000657">
    <property type="protein sequence ID" value="AAC06492.1"/>
    <property type="molecule type" value="Genomic_DNA"/>
</dbReference>
<dbReference type="PIR" id="H70311">
    <property type="entry name" value="H70311"/>
</dbReference>
<dbReference type="RefSeq" id="NP_213083.1">
    <property type="nucleotide sequence ID" value="NC_000918.1"/>
</dbReference>
<dbReference type="RefSeq" id="WP_010880021.1">
    <property type="nucleotide sequence ID" value="NC_000918.1"/>
</dbReference>
<dbReference type="PDB" id="3BN0">
    <property type="method" value="X-ray"/>
    <property type="resolution" value="2.00 A"/>
    <property type="chains" value="A=1-112"/>
</dbReference>
<dbReference type="PDBsum" id="3BN0"/>
<dbReference type="SMR" id="O66523"/>
<dbReference type="FunCoup" id="O66523">
    <property type="interactions" value="454"/>
</dbReference>
<dbReference type="STRING" id="224324.aq_123"/>
<dbReference type="EnsemblBacteria" id="AAC06492">
    <property type="protein sequence ID" value="AAC06492"/>
    <property type="gene ID" value="aq_123"/>
</dbReference>
<dbReference type="KEGG" id="aae:aq_123"/>
<dbReference type="PATRIC" id="fig|224324.8.peg.106"/>
<dbReference type="eggNOG" id="COG0228">
    <property type="taxonomic scope" value="Bacteria"/>
</dbReference>
<dbReference type="HOGENOM" id="CLU_100590_2_2_0"/>
<dbReference type="InParanoid" id="O66523"/>
<dbReference type="OrthoDB" id="9807878at2"/>
<dbReference type="EvolutionaryTrace" id="O66523"/>
<dbReference type="Proteomes" id="UP000000798">
    <property type="component" value="Chromosome"/>
</dbReference>
<dbReference type="GO" id="GO:0005737">
    <property type="term" value="C:cytoplasm"/>
    <property type="evidence" value="ECO:0007669"/>
    <property type="project" value="UniProtKB-ARBA"/>
</dbReference>
<dbReference type="GO" id="GO:0015935">
    <property type="term" value="C:small ribosomal subunit"/>
    <property type="evidence" value="ECO:0000318"/>
    <property type="project" value="GO_Central"/>
</dbReference>
<dbReference type="GO" id="GO:0003735">
    <property type="term" value="F:structural constituent of ribosome"/>
    <property type="evidence" value="ECO:0000318"/>
    <property type="project" value="GO_Central"/>
</dbReference>
<dbReference type="GO" id="GO:0006412">
    <property type="term" value="P:translation"/>
    <property type="evidence" value="ECO:0007669"/>
    <property type="project" value="UniProtKB-UniRule"/>
</dbReference>
<dbReference type="Gene3D" id="3.30.1320.10">
    <property type="match status" value="1"/>
</dbReference>
<dbReference type="HAMAP" id="MF_00385">
    <property type="entry name" value="Ribosomal_bS16"/>
    <property type="match status" value="1"/>
</dbReference>
<dbReference type="InterPro" id="IPR000307">
    <property type="entry name" value="Ribosomal_bS16"/>
</dbReference>
<dbReference type="InterPro" id="IPR023803">
    <property type="entry name" value="Ribosomal_bS16_dom_sf"/>
</dbReference>
<dbReference type="NCBIfam" id="TIGR00002">
    <property type="entry name" value="S16"/>
    <property type="match status" value="1"/>
</dbReference>
<dbReference type="PANTHER" id="PTHR12919">
    <property type="entry name" value="30S RIBOSOMAL PROTEIN S16"/>
    <property type="match status" value="1"/>
</dbReference>
<dbReference type="PANTHER" id="PTHR12919:SF20">
    <property type="entry name" value="SMALL RIBOSOMAL SUBUNIT PROTEIN BS16M"/>
    <property type="match status" value="1"/>
</dbReference>
<dbReference type="Pfam" id="PF00886">
    <property type="entry name" value="Ribosomal_S16"/>
    <property type="match status" value="1"/>
</dbReference>
<dbReference type="SUPFAM" id="SSF54565">
    <property type="entry name" value="Ribosomal protein S16"/>
    <property type="match status" value="1"/>
</dbReference>
<organism>
    <name type="scientific">Aquifex aeolicus (strain VF5)</name>
    <dbReference type="NCBI Taxonomy" id="224324"/>
    <lineage>
        <taxon>Bacteria</taxon>
        <taxon>Pseudomonadati</taxon>
        <taxon>Aquificota</taxon>
        <taxon>Aquificia</taxon>
        <taxon>Aquificales</taxon>
        <taxon>Aquificaceae</taxon>
        <taxon>Aquifex</taxon>
    </lineage>
</organism>
<comment type="similarity">
    <text evidence="1">Belongs to the bacterial ribosomal protein bS16 family.</text>
</comment>